<feature type="chain" id="PRO_0000413892" description="Alpha-1,4-glucan:maltose-1-phosphate maltosyltransferase">
    <location>
        <begin position="1"/>
        <end position="746"/>
    </location>
</feature>
<feature type="region of interest" description="Disordered" evidence="2">
    <location>
        <begin position="1"/>
        <end position="43"/>
    </location>
</feature>
<feature type="compositionally biased region" description="Low complexity" evidence="2">
    <location>
        <begin position="10"/>
        <end position="32"/>
    </location>
</feature>
<feature type="active site" description="Nucleophile" evidence="1">
    <location>
        <position position="473"/>
    </location>
</feature>
<feature type="active site" description="Proton donor" evidence="1">
    <location>
        <position position="502"/>
    </location>
</feature>
<feature type="binding site" evidence="1">
    <location>
        <position position="343"/>
    </location>
    <ligand>
        <name>alpha-maltose 1-phosphate</name>
        <dbReference type="ChEBI" id="CHEBI:63576"/>
    </ligand>
</feature>
<feature type="binding site" evidence="1">
    <location>
        <position position="403"/>
    </location>
    <ligand>
        <name>alpha-maltose 1-phosphate</name>
        <dbReference type="ChEBI" id="CHEBI:63576"/>
    </ligand>
</feature>
<feature type="binding site" evidence="1">
    <location>
        <position position="438"/>
    </location>
    <ligand>
        <name>alpha-maltose 1-phosphate</name>
        <dbReference type="ChEBI" id="CHEBI:63576"/>
    </ligand>
</feature>
<feature type="binding site" evidence="1">
    <location>
        <position position="474"/>
    </location>
    <ligand>
        <name>alpha-maltose 1-phosphate</name>
        <dbReference type="ChEBI" id="CHEBI:63576"/>
    </ligand>
</feature>
<feature type="binding site" evidence="1">
    <location>
        <begin position="612"/>
        <end position="613"/>
    </location>
    <ligand>
        <name>alpha-maltose 1-phosphate</name>
        <dbReference type="ChEBI" id="CHEBI:63576"/>
    </ligand>
</feature>
<feature type="site" description="Transition state stabilizer" evidence="1">
    <location>
        <position position="559"/>
    </location>
</feature>
<name>GLGE_BIFLO</name>
<keyword id="KW-0119">Carbohydrate metabolism</keyword>
<keyword id="KW-0328">Glycosyltransferase</keyword>
<keyword id="KW-1185">Reference proteome</keyword>
<keyword id="KW-0808">Transferase</keyword>
<gene>
    <name evidence="1" type="primary">glgE</name>
    <name type="ordered locus">BL0388</name>
</gene>
<reference key="1">
    <citation type="journal article" date="2002" name="Proc. Natl. Acad. Sci. U.S.A.">
        <title>The genome sequence of Bifidobacterium longum reflects its adaptation to the human gastrointestinal tract.</title>
        <authorList>
            <person name="Schell M.A."/>
            <person name="Karmirantzou M."/>
            <person name="Snel B."/>
            <person name="Vilanova D."/>
            <person name="Berger B."/>
            <person name="Pessi G."/>
            <person name="Zwahlen M.-C."/>
            <person name="Desiere F."/>
            <person name="Bork P."/>
            <person name="Delley M."/>
            <person name="Pridmore R.D."/>
            <person name="Arigoni F."/>
        </authorList>
    </citation>
    <scope>NUCLEOTIDE SEQUENCE [LARGE SCALE GENOMIC DNA]</scope>
    <source>
        <strain>NCC 2705</strain>
    </source>
</reference>
<comment type="function">
    <text evidence="1">Maltosyltransferase that uses maltose 1-phosphate (M1P) as the sugar donor to elongate linear or branched alpha-(1-&gt;4)-glucans. Is involved in a branched alpha-glucan biosynthetic pathway from trehalose, together with TreS, Mak and GlgB.</text>
</comment>
<comment type="catalytic activity">
    <reaction evidence="1">
        <text>alpha-maltose 1-phosphate + [(1-&gt;4)-alpha-D-glucosyl](n) = [(1-&gt;4)-alpha-D-glucosyl](n+2) + phosphate</text>
        <dbReference type="Rhea" id="RHEA:42692"/>
        <dbReference type="Rhea" id="RHEA-COMP:9584"/>
        <dbReference type="Rhea" id="RHEA-COMP:10183"/>
        <dbReference type="ChEBI" id="CHEBI:15444"/>
        <dbReference type="ChEBI" id="CHEBI:43474"/>
        <dbReference type="ChEBI" id="CHEBI:63576"/>
        <dbReference type="EC" id="2.4.99.16"/>
    </reaction>
</comment>
<comment type="subunit">
    <text evidence="1">Homodimer.</text>
</comment>
<comment type="similarity">
    <text evidence="1">Belongs to the glycosyl hydrolase 13 family. GlgE subfamily.</text>
</comment>
<sequence length="746" mass="82905">MAAVQHRATTRTSNTDNSTTKTKSKATSARKSPATKRKRVSAETARAAAALKGLAVEAPAPSIEANEPGQFGRINVMDITPAEERGIFPARVELGEPFEMTAQVFIEGRTKVGATAIVRNPRGKETMRRAMTCVNPGLDRWTVMVKCGEHSDLKPWEDGYAAVKRQLGEWTVTIEGWEDAYVSWLHDARIKVRVMDDVDNALNSGAELLARWAETPDTGLTARDRKTLEKAAETMADQTLSAEDRLAAGDNPTIAALHETHPLRDGISPSQPQRFKVERPKSSFAAWYQFFPRSEGATIDPNTGKIIQGTLKTSMAGLERAAAEGFDIVYLPPVFPIGVTNRKGRNNTLVAGPDDPGSPFGIGSELGGHDTVDPLLGTMDDFKALCQRAHELGLEIALDFALQCSPDHPWVKAHPNWFRHKPDGSIAFAENPPKKYQDIYPIDFNADMPGIEKEVERIMNLWIEAGVTIFRIDNPHTKPVRFWQDVIAAVTKKHPEILFLAEAFTRPGMMRALSYVGFTQSHCYFPWRNTKDELEEYLPVTNGDDGYYQHNTFWPTTPDILTAYVRDNGVAGHCVRAVLAAMGSPSWGIYNGYELIENKQRPGFEEQIDNEKYEVKVRDWSKAKQYGVAEMLTALNKIRRAHPAALSYHNLTVLPTSDPNILAFARHTPAELTGTGQADTLIVVVNLDGHNAHQSMIHLELSELGLPTDRPLNVRDELTGREFQWGWDNYVSLAPWADVAHILSVQ</sequence>
<protein>
    <recommendedName>
        <fullName evidence="1">Alpha-1,4-glucan:maltose-1-phosphate maltosyltransferase</fullName>
        <shortName evidence="1">GMPMT</shortName>
        <ecNumber evidence="1">2.4.99.16</ecNumber>
    </recommendedName>
    <alternativeName>
        <fullName evidence="1">(1-&gt;4)-alpha-D-glucan:maltose-1-phosphate alpha-D-maltosyltransferase</fullName>
    </alternativeName>
</protein>
<proteinExistence type="inferred from homology"/>
<accession>Q8G784</accession>
<dbReference type="EC" id="2.4.99.16" evidence="1"/>
<dbReference type="EMBL" id="AE014295">
    <property type="protein sequence ID" value="AAN24224.1"/>
    <property type="molecule type" value="Genomic_DNA"/>
</dbReference>
<dbReference type="RefSeq" id="NP_695588.1">
    <property type="nucleotide sequence ID" value="NC_004307.2"/>
</dbReference>
<dbReference type="RefSeq" id="WP_007054760.1">
    <property type="nucleotide sequence ID" value="NC_004307.2"/>
</dbReference>
<dbReference type="SMR" id="Q8G784"/>
<dbReference type="STRING" id="206672.BL0388"/>
<dbReference type="CAZy" id="GH13">
    <property type="family name" value="Glycoside Hydrolase Family 13"/>
</dbReference>
<dbReference type="EnsemblBacteria" id="AAN24224">
    <property type="protein sequence ID" value="AAN24224"/>
    <property type="gene ID" value="BL0388"/>
</dbReference>
<dbReference type="KEGG" id="blo:BL0388"/>
<dbReference type="PATRIC" id="fig|206672.9.peg.1130"/>
<dbReference type="HOGENOM" id="CLU_015798_0_0_11"/>
<dbReference type="OrthoDB" id="9805159at2"/>
<dbReference type="PhylomeDB" id="Q8G784"/>
<dbReference type="Proteomes" id="UP000000439">
    <property type="component" value="Chromosome"/>
</dbReference>
<dbReference type="GO" id="GO:0016758">
    <property type="term" value="F:hexosyltransferase activity"/>
    <property type="evidence" value="ECO:0007669"/>
    <property type="project" value="UniProtKB-UniRule"/>
</dbReference>
<dbReference type="GO" id="GO:0004553">
    <property type="term" value="F:hydrolase activity, hydrolyzing O-glycosyl compounds"/>
    <property type="evidence" value="ECO:0007669"/>
    <property type="project" value="InterPro"/>
</dbReference>
<dbReference type="GO" id="GO:0030979">
    <property type="term" value="P:alpha-glucan biosynthetic process"/>
    <property type="evidence" value="ECO:0007669"/>
    <property type="project" value="UniProtKB-UniRule"/>
</dbReference>
<dbReference type="CDD" id="cd11344">
    <property type="entry name" value="AmyAc_GlgE_like"/>
    <property type="match status" value="1"/>
</dbReference>
<dbReference type="Gene3D" id="3.20.20.80">
    <property type="entry name" value="Glycosidases"/>
    <property type="match status" value="1"/>
</dbReference>
<dbReference type="Gene3D" id="2.60.40.1180">
    <property type="entry name" value="Golgi alpha-mannosidase II"/>
    <property type="match status" value="1"/>
</dbReference>
<dbReference type="Gene3D" id="2.60.40.10">
    <property type="entry name" value="Immunoglobulins"/>
    <property type="match status" value="1"/>
</dbReference>
<dbReference type="Gene3D" id="1.20.58.80">
    <property type="entry name" value="Phosphotransferase system, lactose/cellobiose-type IIA subunit"/>
    <property type="match status" value="1"/>
</dbReference>
<dbReference type="HAMAP" id="MF_02124">
    <property type="entry name" value="GlgE"/>
    <property type="match status" value="1"/>
</dbReference>
<dbReference type="InterPro" id="IPR026585">
    <property type="entry name" value="GlgE"/>
</dbReference>
<dbReference type="InterPro" id="IPR049171">
    <property type="entry name" value="GLGE_C"/>
</dbReference>
<dbReference type="InterPro" id="IPR021828">
    <property type="entry name" value="GlgE_dom_N/S"/>
</dbReference>
<dbReference type="InterPro" id="IPR006047">
    <property type="entry name" value="Glyco_hydro_13_cat_dom"/>
</dbReference>
<dbReference type="InterPro" id="IPR013780">
    <property type="entry name" value="Glyco_hydro_b"/>
</dbReference>
<dbReference type="InterPro" id="IPR017853">
    <property type="entry name" value="Glycoside_hydrolase_SF"/>
</dbReference>
<dbReference type="InterPro" id="IPR013783">
    <property type="entry name" value="Ig-like_fold"/>
</dbReference>
<dbReference type="PANTHER" id="PTHR47786">
    <property type="entry name" value="ALPHA-1,4-GLUCAN:MALTOSE-1-PHOSPHATE MALTOSYLTRANSFERASE"/>
    <property type="match status" value="1"/>
</dbReference>
<dbReference type="PANTHER" id="PTHR47786:SF2">
    <property type="entry name" value="GLYCOSYL HYDROLASE FAMILY 13 CATALYTIC DOMAIN-CONTAINING PROTEIN"/>
    <property type="match status" value="1"/>
</dbReference>
<dbReference type="Pfam" id="PF21702">
    <property type="entry name" value="GLGE_C"/>
    <property type="match status" value="1"/>
</dbReference>
<dbReference type="Pfam" id="PF11896">
    <property type="entry name" value="GlgE_dom_N_S"/>
    <property type="match status" value="1"/>
</dbReference>
<dbReference type="SMART" id="SM00642">
    <property type="entry name" value="Aamy"/>
    <property type="match status" value="1"/>
</dbReference>
<dbReference type="SUPFAM" id="SSF51445">
    <property type="entry name" value="(Trans)glycosidases"/>
    <property type="match status" value="1"/>
</dbReference>
<organism>
    <name type="scientific">Bifidobacterium longum (strain NCC 2705)</name>
    <dbReference type="NCBI Taxonomy" id="206672"/>
    <lineage>
        <taxon>Bacteria</taxon>
        <taxon>Bacillati</taxon>
        <taxon>Actinomycetota</taxon>
        <taxon>Actinomycetes</taxon>
        <taxon>Bifidobacteriales</taxon>
        <taxon>Bifidobacteriaceae</taxon>
        <taxon>Bifidobacterium</taxon>
    </lineage>
</organism>
<evidence type="ECO:0000255" key="1">
    <source>
        <dbReference type="HAMAP-Rule" id="MF_02124"/>
    </source>
</evidence>
<evidence type="ECO:0000256" key="2">
    <source>
        <dbReference type="SAM" id="MobiDB-lite"/>
    </source>
</evidence>